<sequence length="375" mass="44683">MDQMELFDDYLLYCVGCCNKGEIESRLSKPKGVCRMKLDKGKKITVEYVPEDNYIYIDLENAIQFIKFISKHNYFCYEIDGDYHKCKMDKYIHRYIMFVITNNMEDHIEIIFSRLLPAYKNFKGTHTTDFIKLLISGITKYNSEQLVKTIIDNYPYNDYSLLFEKVIEGNADKDLIEYTIDAYRKKLFRYIKKNKNILPKVDLEDILFQFIITNDVDMFNFVVNSFMDISNDFQELKINDKQQKKIDDLTKLFDYEKFSHSLISAAIENNSYKIISQLIDDSVGLDYFDYRSLRYIMKEEKFEVFDVVLEKVIKHDKKMINRLFLKSYHYEIPIIDSLISYGANYNKYGHTVIFLAKLNDYTEVVEFLKKIINGQ</sequence>
<evidence type="ECO:0000305" key="1"/>
<protein>
    <recommendedName>
        <fullName>Uncharacterized protein L697</fullName>
    </recommendedName>
</protein>
<reference key="1">
    <citation type="journal article" date="2004" name="Science">
        <title>The 1.2-megabase genome sequence of Mimivirus.</title>
        <authorList>
            <person name="Raoult D."/>
            <person name="Audic S."/>
            <person name="Robert C."/>
            <person name="Abergel C."/>
            <person name="Renesto P."/>
            <person name="Ogata H."/>
            <person name="La Scola B."/>
            <person name="Susan M."/>
            <person name="Claverie J.-M."/>
        </authorList>
    </citation>
    <scope>NUCLEOTIDE SEQUENCE [LARGE SCALE GENOMIC DNA]</scope>
    <source>
        <strain>Rowbotham-Bradford</strain>
    </source>
</reference>
<name>YL697_MIMIV</name>
<accession>Q5UNV8</accession>
<keyword id="KW-1185">Reference proteome</keyword>
<organism>
    <name type="scientific">Acanthamoeba polyphaga mimivirus</name>
    <name type="common">APMV</name>
    <dbReference type="NCBI Taxonomy" id="212035"/>
    <lineage>
        <taxon>Viruses</taxon>
        <taxon>Varidnaviria</taxon>
        <taxon>Bamfordvirae</taxon>
        <taxon>Nucleocytoviricota</taxon>
        <taxon>Megaviricetes</taxon>
        <taxon>Imitervirales</taxon>
        <taxon>Mimiviridae</taxon>
        <taxon>Megamimivirinae</taxon>
        <taxon>Mimivirus</taxon>
        <taxon>Mimivirus bradfordmassiliense</taxon>
    </lineage>
</organism>
<feature type="chain" id="PRO_0000071326" description="Uncharacterized protein L697">
    <location>
        <begin position="1"/>
        <end position="375"/>
    </location>
</feature>
<gene>
    <name type="ordered locus">MIMI_L697</name>
</gene>
<comment type="similarity">
    <text evidence="1">Belongs to the mimivirus L17x/L18x family.</text>
</comment>
<organismHost>
    <name type="scientific">Acanthamoeba polyphaga</name>
    <name type="common">Amoeba</name>
    <dbReference type="NCBI Taxonomy" id="5757"/>
</organismHost>
<proteinExistence type="inferred from homology"/>
<dbReference type="EMBL" id="AY653733">
    <property type="protein sequence ID" value="AAV50958.1"/>
    <property type="molecule type" value="Genomic_DNA"/>
</dbReference>
<dbReference type="SMR" id="Q5UNV8"/>
<dbReference type="KEGG" id="vg:9925350"/>
<dbReference type="OrthoDB" id="39116at10239"/>
<dbReference type="Proteomes" id="UP000001134">
    <property type="component" value="Genome"/>
</dbReference>
<dbReference type="InterPro" id="IPR036770">
    <property type="entry name" value="Ankyrin_rpt-contain_sf"/>
</dbReference>
<dbReference type="SUPFAM" id="SSF48403">
    <property type="entry name" value="Ankyrin repeat"/>
    <property type="match status" value="1"/>
</dbReference>